<evidence type="ECO:0000255" key="1">
    <source>
        <dbReference type="HAMAP-Rule" id="MF_00636"/>
    </source>
</evidence>
<keyword id="KW-0067">ATP-binding</keyword>
<keyword id="KW-0342">GTP-binding</keyword>
<keyword id="KW-0547">Nucleotide-binding</keyword>
<keyword id="KW-1185">Reference proteome</keyword>
<reference key="1">
    <citation type="submission" date="2006-10" db="EMBL/GenBank/DDBJ databases">
        <title>Complete sequence of Syntrophobacter fumaroxidans MPOB.</title>
        <authorList>
            <consortium name="US DOE Joint Genome Institute"/>
            <person name="Copeland A."/>
            <person name="Lucas S."/>
            <person name="Lapidus A."/>
            <person name="Barry K."/>
            <person name="Detter J.C."/>
            <person name="Glavina del Rio T."/>
            <person name="Hammon N."/>
            <person name="Israni S."/>
            <person name="Pitluck S."/>
            <person name="Goltsman E.G."/>
            <person name="Martinez M."/>
            <person name="Schmutz J."/>
            <person name="Larimer F."/>
            <person name="Land M."/>
            <person name="Hauser L."/>
            <person name="Kyrpides N."/>
            <person name="Kim E."/>
            <person name="Boone D.R."/>
            <person name="Brockman F."/>
            <person name="Culley D."/>
            <person name="Ferry J."/>
            <person name="Gunsalus R."/>
            <person name="McInerney M.J."/>
            <person name="Morrison M."/>
            <person name="Plugge C."/>
            <person name="Rohlin L."/>
            <person name="Scholten J."/>
            <person name="Sieber J."/>
            <person name="Stams A.J.M."/>
            <person name="Worm P."/>
            <person name="Henstra A.M."/>
            <person name="Richardson P."/>
        </authorList>
    </citation>
    <scope>NUCLEOTIDE SEQUENCE [LARGE SCALE GENOMIC DNA]</scope>
    <source>
        <strain>DSM 10017 / MPOB</strain>
    </source>
</reference>
<gene>
    <name type="ordered locus">Sfum_2066</name>
</gene>
<feature type="chain" id="PRO_0000383298" description="Nucleotide-binding protein Sfum_2066">
    <location>
        <begin position="1"/>
        <end position="286"/>
    </location>
</feature>
<feature type="binding site" evidence="1">
    <location>
        <begin position="8"/>
        <end position="15"/>
    </location>
    <ligand>
        <name>ATP</name>
        <dbReference type="ChEBI" id="CHEBI:30616"/>
    </ligand>
</feature>
<feature type="binding site" evidence="1">
    <location>
        <begin position="59"/>
        <end position="62"/>
    </location>
    <ligand>
        <name>GTP</name>
        <dbReference type="ChEBI" id="CHEBI:37565"/>
    </ligand>
</feature>
<dbReference type="EMBL" id="CP000478">
    <property type="protein sequence ID" value="ABK17749.1"/>
    <property type="molecule type" value="Genomic_DNA"/>
</dbReference>
<dbReference type="SMR" id="A0LJZ7"/>
<dbReference type="FunCoup" id="A0LJZ7">
    <property type="interactions" value="167"/>
</dbReference>
<dbReference type="STRING" id="335543.Sfum_2066"/>
<dbReference type="KEGG" id="sfu:Sfum_2066"/>
<dbReference type="eggNOG" id="COG1660">
    <property type="taxonomic scope" value="Bacteria"/>
</dbReference>
<dbReference type="HOGENOM" id="CLU_059558_0_0_7"/>
<dbReference type="InParanoid" id="A0LJZ7"/>
<dbReference type="Proteomes" id="UP000001784">
    <property type="component" value="Chromosome"/>
</dbReference>
<dbReference type="GO" id="GO:0005524">
    <property type="term" value="F:ATP binding"/>
    <property type="evidence" value="ECO:0007669"/>
    <property type="project" value="UniProtKB-UniRule"/>
</dbReference>
<dbReference type="GO" id="GO:0005525">
    <property type="term" value="F:GTP binding"/>
    <property type="evidence" value="ECO:0007669"/>
    <property type="project" value="UniProtKB-UniRule"/>
</dbReference>
<dbReference type="Gene3D" id="3.40.50.300">
    <property type="entry name" value="P-loop containing nucleotide triphosphate hydrolases"/>
    <property type="match status" value="1"/>
</dbReference>
<dbReference type="HAMAP" id="MF_00636">
    <property type="entry name" value="RapZ_like"/>
    <property type="match status" value="1"/>
</dbReference>
<dbReference type="InterPro" id="IPR027417">
    <property type="entry name" value="P-loop_NTPase"/>
</dbReference>
<dbReference type="InterPro" id="IPR005337">
    <property type="entry name" value="RapZ-like"/>
</dbReference>
<dbReference type="InterPro" id="IPR053930">
    <property type="entry name" value="RapZ-like_N"/>
</dbReference>
<dbReference type="InterPro" id="IPR053931">
    <property type="entry name" value="RapZ_C"/>
</dbReference>
<dbReference type="NCBIfam" id="NF003828">
    <property type="entry name" value="PRK05416.1"/>
    <property type="match status" value="1"/>
</dbReference>
<dbReference type="PANTHER" id="PTHR30448">
    <property type="entry name" value="RNASE ADAPTER PROTEIN RAPZ"/>
    <property type="match status" value="1"/>
</dbReference>
<dbReference type="PANTHER" id="PTHR30448:SF0">
    <property type="entry name" value="RNASE ADAPTER PROTEIN RAPZ"/>
    <property type="match status" value="1"/>
</dbReference>
<dbReference type="Pfam" id="PF22740">
    <property type="entry name" value="PapZ_C"/>
    <property type="match status" value="1"/>
</dbReference>
<dbReference type="Pfam" id="PF03668">
    <property type="entry name" value="RapZ-like_N"/>
    <property type="match status" value="1"/>
</dbReference>
<dbReference type="PIRSF" id="PIRSF005052">
    <property type="entry name" value="P-loopkin"/>
    <property type="match status" value="1"/>
</dbReference>
<dbReference type="SUPFAM" id="SSF52540">
    <property type="entry name" value="P-loop containing nucleoside triphosphate hydrolases"/>
    <property type="match status" value="1"/>
</dbReference>
<sequence length="286" mass="32735">MHVVVVTGLSGSGKSTAIKAFEDLDYFCIDNLPVPMLPEFLALCEKDMPDIHKIALGIDIRERKFLKDYAKIFQDLEESGYRFEIIFLEAATDTLQRRYSQTRRVHPAASSQSLLVDAIHQEREQLRALRSRATRIIDTGTLSVHQLKAMITRTYSMIGDTELLSIQVLSFGFKYGLPFEADMVMDVRFLPNPYFVEALKNLDGRSEEVSSWVLRWTATREFVEEYGALLLKLIPLYIREGKRYLTVAAGCTGGKHRSVVIAERIAGTLRDHNYFVNVFHRDLHLE</sequence>
<protein>
    <recommendedName>
        <fullName evidence="1">Nucleotide-binding protein Sfum_2066</fullName>
    </recommendedName>
</protein>
<proteinExistence type="inferred from homology"/>
<name>Y2066_SYNFM</name>
<accession>A0LJZ7</accession>
<comment type="function">
    <text evidence="1">Displays ATPase and GTPase activities.</text>
</comment>
<comment type="similarity">
    <text evidence="1">Belongs to the RapZ-like family.</text>
</comment>
<organism>
    <name type="scientific">Syntrophobacter fumaroxidans (strain DSM 10017 / MPOB)</name>
    <dbReference type="NCBI Taxonomy" id="335543"/>
    <lineage>
        <taxon>Bacteria</taxon>
        <taxon>Pseudomonadati</taxon>
        <taxon>Thermodesulfobacteriota</taxon>
        <taxon>Syntrophobacteria</taxon>
        <taxon>Syntrophobacterales</taxon>
        <taxon>Syntrophobacteraceae</taxon>
        <taxon>Syntrophobacter</taxon>
    </lineage>
</organism>